<sequence length="325" mass="35627">MECYEQSRQRAAFVVLLFIVMLGSQAQAQLRTDFYSDSCPSLLPTVRRVVQREVAKERRIAASLLRLFFHDCFVNGCDASILLDDTRSFLGEKTAGPNNNSVRGYEVIDAIKSRVERLCPGVVSCADILAITARDSVLLMGGRGWSVKLGRRDSITASFSTANSGVLPPPTSTLDNLINLFRANGLSPRDMVALSGAHTIGQARCVTFRSRIYNSTNIDLSFALSRRRSCPAATGSGDNNAAILDLRTPEKFDGSYFMQLVNHRGLLTSDQVLFNGGSTDSIVVSYSRSVQAFYRDFVAAMIKMGDISPLTGSNGQIRRSCRRPN</sequence>
<reference key="1">
    <citation type="journal article" date="2000" name="DNA Res.">
        <title>Structural analysis of Arabidopsis thaliana chromosome 5. X. Sequence features of the regions of 3,076,755 bp covered by sixty P1 and TAC clones.</title>
        <authorList>
            <person name="Sato S."/>
            <person name="Nakamura Y."/>
            <person name="Kaneko T."/>
            <person name="Katoh T."/>
            <person name="Asamizu E."/>
            <person name="Kotani H."/>
            <person name="Tabata S."/>
        </authorList>
    </citation>
    <scope>NUCLEOTIDE SEQUENCE [LARGE SCALE GENOMIC DNA]</scope>
    <source>
        <strain>cv. Columbia</strain>
    </source>
</reference>
<reference key="2">
    <citation type="journal article" date="2017" name="Plant J.">
        <title>Araport11: a complete reannotation of the Arabidopsis thaliana reference genome.</title>
        <authorList>
            <person name="Cheng C.Y."/>
            <person name="Krishnakumar V."/>
            <person name="Chan A.P."/>
            <person name="Thibaud-Nissen F."/>
            <person name="Schobel S."/>
            <person name="Town C.D."/>
        </authorList>
    </citation>
    <scope>GENOME REANNOTATION</scope>
    <source>
        <strain>cv. Columbia</strain>
    </source>
</reference>
<reference key="3">
    <citation type="journal article" date="2002" name="Science">
        <title>Functional annotation of a full-length Arabidopsis cDNA collection.</title>
        <authorList>
            <person name="Seki M."/>
            <person name="Narusaka M."/>
            <person name="Kamiya A."/>
            <person name="Ishida J."/>
            <person name="Satou M."/>
            <person name="Sakurai T."/>
            <person name="Nakajima M."/>
            <person name="Enju A."/>
            <person name="Akiyama K."/>
            <person name="Oono Y."/>
            <person name="Muramatsu M."/>
            <person name="Hayashizaki Y."/>
            <person name="Kawai J."/>
            <person name="Carninci P."/>
            <person name="Itoh M."/>
            <person name="Ishii Y."/>
            <person name="Arakawa T."/>
            <person name="Shibata K."/>
            <person name="Shinagawa A."/>
            <person name="Shinozaki K."/>
        </authorList>
    </citation>
    <scope>NUCLEOTIDE SEQUENCE [LARGE SCALE MRNA]</scope>
    <source>
        <strain>cv. Columbia</strain>
    </source>
</reference>
<reference key="4">
    <citation type="journal article" date="2003" name="Science">
        <title>Empirical analysis of transcriptional activity in the Arabidopsis genome.</title>
        <authorList>
            <person name="Yamada K."/>
            <person name="Lim J."/>
            <person name="Dale J.M."/>
            <person name="Chen H."/>
            <person name="Shinn P."/>
            <person name="Palm C.J."/>
            <person name="Southwick A.M."/>
            <person name="Wu H.C."/>
            <person name="Kim C.J."/>
            <person name="Nguyen M."/>
            <person name="Pham P.K."/>
            <person name="Cheuk R.F."/>
            <person name="Karlin-Newmann G."/>
            <person name="Liu S.X."/>
            <person name="Lam B."/>
            <person name="Sakano H."/>
            <person name="Wu T."/>
            <person name="Yu G."/>
            <person name="Miranda M."/>
            <person name="Quach H.L."/>
            <person name="Tripp M."/>
            <person name="Chang C.H."/>
            <person name="Lee J.M."/>
            <person name="Toriumi M.J."/>
            <person name="Chan M.M."/>
            <person name="Tang C.C."/>
            <person name="Onodera C.S."/>
            <person name="Deng J.M."/>
            <person name="Akiyama K."/>
            <person name="Ansari Y."/>
            <person name="Arakawa T."/>
            <person name="Banh J."/>
            <person name="Banno F."/>
            <person name="Bowser L."/>
            <person name="Brooks S.Y."/>
            <person name="Carninci P."/>
            <person name="Chao Q."/>
            <person name="Choy N."/>
            <person name="Enju A."/>
            <person name="Goldsmith A.D."/>
            <person name="Gurjal M."/>
            <person name="Hansen N.F."/>
            <person name="Hayashizaki Y."/>
            <person name="Johnson-Hopson C."/>
            <person name="Hsuan V.W."/>
            <person name="Iida K."/>
            <person name="Karnes M."/>
            <person name="Khan S."/>
            <person name="Koesema E."/>
            <person name="Ishida J."/>
            <person name="Jiang P.X."/>
            <person name="Jones T."/>
            <person name="Kawai J."/>
            <person name="Kamiya A."/>
            <person name="Meyers C."/>
            <person name="Nakajima M."/>
            <person name="Narusaka M."/>
            <person name="Seki M."/>
            <person name="Sakurai T."/>
            <person name="Satou M."/>
            <person name="Tamse R."/>
            <person name="Vaysberg M."/>
            <person name="Wallender E.K."/>
            <person name="Wong C."/>
            <person name="Yamamura Y."/>
            <person name="Yuan S."/>
            <person name="Shinozaki K."/>
            <person name="Davis R.W."/>
            <person name="Theologis A."/>
            <person name="Ecker J.R."/>
        </authorList>
    </citation>
    <scope>NUCLEOTIDE SEQUENCE [LARGE SCALE MRNA]</scope>
    <source>
        <strain>cv. Columbia</strain>
    </source>
</reference>
<reference key="5">
    <citation type="journal article" date="2002" name="Gene">
        <title>Analysis and expression of the class III peroxidase large gene family in Arabidopsis thaliana.</title>
        <authorList>
            <person name="Tognolli M."/>
            <person name="Penel C."/>
            <person name="Greppin H."/>
            <person name="Simon P."/>
        </authorList>
    </citation>
    <scope>GENE FAMILY ORGANIZATION</scope>
    <scope>NOMENCLATURE</scope>
    <source>
        <strain>cv. Columbia</strain>
    </source>
</reference>
<evidence type="ECO:0000250" key="1">
    <source>
        <dbReference type="UniProtKB" id="Q42578"/>
    </source>
</evidence>
<evidence type="ECO:0000255" key="2"/>
<evidence type="ECO:0000255" key="3">
    <source>
        <dbReference type="PROSITE-ProRule" id="PRU00297"/>
    </source>
</evidence>
<evidence type="ECO:0000255" key="4">
    <source>
        <dbReference type="PROSITE-ProRule" id="PRU10012"/>
    </source>
</evidence>
<keyword id="KW-0106">Calcium</keyword>
<keyword id="KW-1015">Disulfide bond</keyword>
<keyword id="KW-0325">Glycoprotein</keyword>
<keyword id="KW-0349">Heme</keyword>
<keyword id="KW-0376">Hydrogen peroxide</keyword>
<keyword id="KW-0408">Iron</keyword>
<keyword id="KW-0479">Metal-binding</keyword>
<keyword id="KW-0560">Oxidoreductase</keyword>
<keyword id="KW-0575">Peroxidase</keyword>
<keyword id="KW-0873">Pyrrolidone carboxylic acid</keyword>
<keyword id="KW-1185">Reference proteome</keyword>
<keyword id="KW-0964">Secreted</keyword>
<keyword id="KW-0732">Signal</keyword>
<accession>Q9LVL1</accession>
<gene>
    <name type="primary">PER68</name>
    <name type="synonym">P68</name>
    <name type="ordered locus">At5g58400</name>
    <name type="ORF">MCK7.27</name>
</gene>
<dbReference type="EC" id="1.11.1.7"/>
<dbReference type="EMBL" id="AB019228">
    <property type="protein sequence ID" value="BAA96931.1"/>
    <property type="molecule type" value="Genomic_DNA"/>
</dbReference>
<dbReference type="EMBL" id="CP002688">
    <property type="protein sequence ID" value="AED97048.1"/>
    <property type="molecule type" value="Genomic_DNA"/>
</dbReference>
<dbReference type="EMBL" id="AK118274">
    <property type="protein sequence ID" value="BAC42892.1"/>
    <property type="molecule type" value="mRNA"/>
</dbReference>
<dbReference type="EMBL" id="BT008527">
    <property type="protein sequence ID" value="AAP40354.1"/>
    <property type="molecule type" value="mRNA"/>
</dbReference>
<dbReference type="RefSeq" id="NP_200648.1">
    <property type="nucleotide sequence ID" value="NM_125226.4"/>
</dbReference>
<dbReference type="SMR" id="Q9LVL1"/>
<dbReference type="FunCoup" id="Q9LVL1">
    <property type="interactions" value="127"/>
</dbReference>
<dbReference type="STRING" id="3702.Q9LVL1"/>
<dbReference type="PeroxiBase" id="234">
    <property type="entry name" value="AtPrx68"/>
</dbReference>
<dbReference type="GlyCosmos" id="Q9LVL1">
    <property type="glycosylation" value="2 sites, No reported glycans"/>
</dbReference>
<dbReference type="GlyGen" id="Q9LVL1">
    <property type="glycosylation" value="2 sites"/>
</dbReference>
<dbReference type="PaxDb" id="3702-AT5G58400.1"/>
<dbReference type="ProteomicsDB" id="236394"/>
<dbReference type="EnsemblPlants" id="AT5G58400.1">
    <property type="protein sequence ID" value="AT5G58400.1"/>
    <property type="gene ID" value="AT5G58400"/>
</dbReference>
<dbReference type="GeneID" id="835953"/>
<dbReference type="Gramene" id="AT5G58400.1">
    <property type="protein sequence ID" value="AT5G58400.1"/>
    <property type="gene ID" value="AT5G58400"/>
</dbReference>
<dbReference type="KEGG" id="ath:AT5G58400"/>
<dbReference type="Araport" id="AT5G58400"/>
<dbReference type="TAIR" id="AT5G58400"/>
<dbReference type="eggNOG" id="ENOG502QT8W">
    <property type="taxonomic scope" value="Eukaryota"/>
</dbReference>
<dbReference type="HOGENOM" id="CLU_010543_0_1_1"/>
<dbReference type="InParanoid" id="Q9LVL1"/>
<dbReference type="OMA" id="ITIMMIM"/>
<dbReference type="PhylomeDB" id="Q9LVL1"/>
<dbReference type="BioCyc" id="ARA:AT5G58400-MONOMER"/>
<dbReference type="PRO" id="PR:Q9LVL1"/>
<dbReference type="Proteomes" id="UP000006548">
    <property type="component" value="Chromosome 5"/>
</dbReference>
<dbReference type="ExpressionAtlas" id="Q9LVL1">
    <property type="expression patterns" value="baseline and differential"/>
</dbReference>
<dbReference type="GO" id="GO:0005576">
    <property type="term" value="C:extracellular region"/>
    <property type="evidence" value="ECO:0007669"/>
    <property type="project" value="UniProtKB-SubCell"/>
</dbReference>
<dbReference type="GO" id="GO:0020037">
    <property type="term" value="F:heme binding"/>
    <property type="evidence" value="ECO:0007669"/>
    <property type="project" value="InterPro"/>
</dbReference>
<dbReference type="GO" id="GO:0140825">
    <property type="term" value="F:lactoperoxidase activity"/>
    <property type="evidence" value="ECO:0007669"/>
    <property type="project" value="UniProtKB-EC"/>
</dbReference>
<dbReference type="GO" id="GO:0046872">
    <property type="term" value="F:metal ion binding"/>
    <property type="evidence" value="ECO:0007669"/>
    <property type="project" value="UniProtKB-KW"/>
</dbReference>
<dbReference type="GO" id="GO:0042744">
    <property type="term" value="P:hydrogen peroxide catabolic process"/>
    <property type="evidence" value="ECO:0007669"/>
    <property type="project" value="UniProtKB-KW"/>
</dbReference>
<dbReference type="GO" id="GO:0006979">
    <property type="term" value="P:response to oxidative stress"/>
    <property type="evidence" value="ECO:0007669"/>
    <property type="project" value="InterPro"/>
</dbReference>
<dbReference type="CDD" id="cd00693">
    <property type="entry name" value="secretory_peroxidase"/>
    <property type="match status" value="1"/>
</dbReference>
<dbReference type="FunFam" id="1.10.420.10:FF:000006">
    <property type="entry name" value="Peroxidase"/>
    <property type="match status" value="1"/>
</dbReference>
<dbReference type="FunFam" id="1.10.520.10:FF:000009">
    <property type="entry name" value="Peroxidase"/>
    <property type="match status" value="1"/>
</dbReference>
<dbReference type="Gene3D" id="1.10.520.10">
    <property type="match status" value="1"/>
</dbReference>
<dbReference type="Gene3D" id="1.10.420.10">
    <property type="entry name" value="Peroxidase, domain 2"/>
    <property type="match status" value="1"/>
</dbReference>
<dbReference type="InterPro" id="IPR002016">
    <property type="entry name" value="Haem_peroxidase"/>
</dbReference>
<dbReference type="InterPro" id="IPR010255">
    <property type="entry name" value="Haem_peroxidase_sf"/>
</dbReference>
<dbReference type="InterPro" id="IPR000823">
    <property type="entry name" value="Peroxidase_pln"/>
</dbReference>
<dbReference type="InterPro" id="IPR019794">
    <property type="entry name" value="Peroxidases_AS"/>
</dbReference>
<dbReference type="InterPro" id="IPR019793">
    <property type="entry name" value="Peroxidases_heam-ligand_BS"/>
</dbReference>
<dbReference type="InterPro" id="IPR033905">
    <property type="entry name" value="Secretory_peroxidase"/>
</dbReference>
<dbReference type="PANTHER" id="PTHR31388:SF144">
    <property type="entry name" value="PEROXIDASE 67-RELATED"/>
    <property type="match status" value="1"/>
</dbReference>
<dbReference type="PANTHER" id="PTHR31388">
    <property type="entry name" value="PEROXIDASE 72-RELATED"/>
    <property type="match status" value="1"/>
</dbReference>
<dbReference type="Pfam" id="PF00141">
    <property type="entry name" value="peroxidase"/>
    <property type="match status" value="1"/>
</dbReference>
<dbReference type="PRINTS" id="PR00458">
    <property type="entry name" value="PEROXIDASE"/>
</dbReference>
<dbReference type="PRINTS" id="PR00461">
    <property type="entry name" value="PLPEROXIDASE"/>
</dbReference>
<dbReference type="SUPFAM" id="SSF48113">
    <property type="entry name" value="Heme-dependent peroxidases"/>
    <property type="match status" value="1"/>
</dbReference>
<dbReference type="PROSITE" id="PS00435">
    <property type="entry name" value="PEROXIDASE_1"/>
    <property type="match status" value="1"/>
</dbReference>
<dbReference type="PROSITE" id="PS00436">
    <property type="entry name" value="PEROXIDASE_2"/>
    <property type="match status" value="1"/>
</dbReference>
<dbReference type="PROSITE" id="PS50873">
    <property type="entry name" value="PEROXIDASE_4"/>
    <property type="match status" value="1"/>
</dbReference>
<organism>
    <name type="scientific">Arabidopsis thaliana</name>
    <name type="common">Mouse-ear cress</name>
    <dbReference type="NCBI Taxonomy" id="3702"/>
    <lineage>
        <taxon>Eukaryota</taxon>
        <taxon>Viridiplantae</taxon>
        <taxon>Streptophyta</taxon>
        <taxon>Embryophyta</taxon>
        <taxon>Tracheophyta</taxon>
        <taxon>Spermatophyta</taxon>
        <taxon>Magnoliopsida</taxon>
        <taxon>eudicotyledons</taxon>
        <taxon>Gunneridae</taxon>
        <taxon>Pentapetalae</taxon>
        <taxon>rosids</taxon>
        <taxon>malvids</taxon>
        <taxon>Brassicales</taxon>
        <taxon>Brassicaceae</taxon>
        <taxon>Camelineae</taxon>
        <taxon>Arabidopsis</taxon>
    </lineage>
</organism>
<protein>
    <recommendedName>
        <fullName>Peroxidase 68</fullName>
        <shortName>Atperox P68</shortName>
        <ecNumber>1.11.1.7</ecNumber>
    </recommendedName>
</protein>
<feature type="signal peptide" evidence="2">
    <location>
        <begin position="1"/>
        <end position="28"/>
    </location>
</feature>
<feature type="chain" id="PRO_0000023733" description="Peroxidase 68">
    <location>
        <begin position="29"/>
        <end position="325"/>
    </location>
</feature>
<feature type="active site" description="Proton acceptor" evidence="3 4">
    <location>
        <position position="70"/>
    </location>
</feature>
<feature type="binding site" evidence="3">
    <location>
        <position position="71"/>
    </location>
    <ligand>
        <name>Ca(2+)</name>
        <dbReference type="ChEBI" id="CHEBI:29108"/>
        <label>1</label>
    </ligand>
</feature>
<feature type="binding site" evidence="3">
    <location>
        <position position="74"/>
    </location>
    <ligand>
        <name>Ca(2+)</name>
        <dbReference type="ChEBI" id="CHEBI:29108"/>
        <label>1</label>
    </ligand>
</feature>
<feature type="binding site" evidence="3">
    <location>
        <position position="76"/>
    </location>
    <ligand>
        <name>Ca(2+)</name>
        <dbReference type="ChEBI" id="CHEBI:29108"/>
        <label>1</label>
    </ligand>
</feature>
<feature type="binding site" evidence="3">
    <location>
        <position position="78"/>
    </location>
    <ligand>
        <name>Ca(2+)</name>
        <dbReference type="ChEBI" id="CHEBI:29108"/>
        <label>1</label>
    </ligand>
</feature>
<feature type="binding site" evidence="3">
    <location>
        <position position="80"/>
    </location>
    <ligand>
        <name>Ca(2+)</name>
        <dbReference type="ChEBI" id="CHEBI:29108"/>
        <label>1</label>
    </ligand>
</feature>
<feature type="binding site" evidence="3">
    <location>
        <position position="168"/>
    </location>
    <ligand>
        <name>substrate</name>
    </ligand>
</feature>
<feature type="binding site" description="axial binding residue" evidence="3">
    <location>
        <position position="198"/>
    </location>
    <ligand>
        <name>heme b</name>
        <dbReference type="ChEBI" id="CHEBI:60344"/>
    </ligand>
    <ligandPart>
        <name>Fe</name>
        <dbReference type="ChEBI" id="CHEBI:18248"/>
    </ligandPart>
</feature>
<feature type="binding site" evidence="3">
    <location>
        <position position="199"/>
    </location>
    <ligand>
        <name>Ca(2+)</name>
        <dbReference type="ChEBI" id="CHEBI:29108"/>
        <label>2</label>
    </ligand>
</feature>
<feature type="binding site" evidence="3">
    <location>
        <position position="245"/>
    </location>
    <ligand>
        <name>Ca(2+)</name>
        <dbReference type="ChEBI" id="CHEBI:29108"/>
        <label>2</label>
    </ligand>
</feature>
<feature type="binding site" evidence="3">
    <location>
        <position position="248"/>
    </location>
    <ligand>
        <name>Ca(2+)</name>
        <dbReference type="ChEBI" id="CHEBI:29108"/>
        <label>2</label>
    </ligand>
</feature>
<feature type="binding site" evidence="3">
    <location>
        <position position="253"/>
    </location>
    <ligand>
        <name>Ca(2+)</name>
        <dbReference type="ChEBI" id="CHEBI:29108"/>
        <label>2</label>
    </ligand>
</feature>
<feature type="site" description="Transition state stabilizer" evidence="3">
    <location>
        <position position="66"/>
    </location>
</feature>
<feature type="modified residue" description="Pyrrolidone carboxylic acid" evidence="1 3">
    <location>
        <position position="29"/>
    </location>
</feature>
<feature type="glycosylation site" description="N-linked (GlcNAc...) asparagine" evidence="2">
    <location>
        <position position="99"/>
    </location>
</feature>
<feature type="glycosylation site" description="N-linked (GlcNAc...) asparagine" evidence="2">
    <location>
        <position position="214"/>
    </location>
</feature>
<feature type="disulfide bond" evidence="3">
    <location>
        <begin position="39"/>
        <end position="119"/>
    </location>
</feature>
<feature type="disulfide bond" evidence="3">
    <location>
        <begin position="72"/>
        <end position="77"/>
    </location>
</feature>
<feature type="disulfide bond" evidence="3">
    <location>
        <begin position="125"/>
        <end position="321"/>
    </location>
</feature>
<feature type="disulfide bond" evidence="3">
    <location>
        <begin position="205"/>
        <end position="230"/>
    </location>
</feature>
<proteinExistence type="evidence at transcript level"/>
<comment type="function">
    <text>Removal of H(2)O(2), oxidation of toxic reductants, biosynthesis and degradation of lignin, suberization, auxin catabolism, response to environmental stresses such as wounding, pathogen attack and oxidative stress. These functions might be dependent on each isozyme/isoform in each plant tissue.</text>
</comment>
<comment type="catalytic activity">
    <reaction>
        <text>2 a phenolic donor + H2O2 = 2 a phenolic radical donor + 2 H2O</text>
        <dbReference type="Rhea" id="RHEA:56136"/>
        <dbReference type="ChEBI" id="CHEBI:15377"/>
        <dbReference type="ChEBI" id="CHEBI:16240"/>
        <dbReference type="ChEBI" id="CHEBI:139520"/>
        <dbReference type="ChEBI" id="CHEBI:139521"/>
        <dbReference type="EC" id="1.11.1.7"/>
    </reaction>
</comment>
<comment type="cofactor">
    <cofactor evidence="3">
        <name>heme b</name>
        <dbReference type="ChEBI" id="CHEBI:60344"/>
    </cofactor>
    <text evidence="3">Binds 1 heme b (iron(II)-protoporphyrin IX) group per subunit.</text>
</comment>
<comment type="cofactor">
    <cofactor evidence="3">
        <name>Ca(2+)</name>
        <dbReference type="ChEBI" id="CHEBI:29108"/>
    </cofactor>
    <text evidence="3">Binds 2 calcium ions per subunit.</text>
</comment>
<comment type="subcellular location">
    <subcellularLocation>
        <location evidence="3">Secreted</location>
    </subcellularLocation>
</comment>
<comment type="miscellaneous">
    <text>There are 73 peroxidase genes in A.thaliana.</text>
</comment>
<comment type="similarity">
    <text evidence="3">Belongs to the peroxidase family. Classical plant (class III) peroxidase subfamily.</text>
</comment>
<name>PER68_ARATH</name>